<gene>
    <name type="primary">Trim63</name>
    <name type="synonym">Murf1</name>
</gene>
<name>TRI63_RAT</name>
<accession>Q91Z63</accession>
<reference key="1">
    <citation type="journal article" date="2001" name="Science">
        <title>Identification of ubiquitin ligases required for skeletal muscle atrophy.</title>
        <authorList>
            <person name="Bodine S.C."/>
            <person name="Latres E."/>
            <person name="Baumhueter S."/>
            <person name="Lai V.K.-M."/>
            <person name="Nunez L."/>
            <person name="Clarke B.A."/>
            <person name="Poueymirou W.T."/>
            <person name="Panaro F.J."/>
            <person name="Na E."/>
            <person name="Dharmarajan K."/>
            <person name="Pan Z.-Q."/>
            <person name="Valenzuela D.M."/>
            <person name="DeChiara T.M."/>
            <person name="Stitt T.N."/>
            <person name="Yancopoulos G.D."/>
            <person name="Glass D.J."/>
        </authorList>
    </citation>
    <scope>NUCLEOTIDE SEQUENCE [MRNA]</scope>
    <scope>TISSUE SPECIFICITY</scope>
    <scope>INDUCTION</scope>
    <scope>FUNCTION</scope>
    <source>
        <strain>Sprague-Dawley</strain>
    </source>
</reference>
<reference key="2">
    <citation type="journal article" date="2004" name="Genome Res.">
        <title>The status, quality, and expansion of the NIH full-length cDNA project: the Mammalian Gene Collection (MGC).</title>
        <authorList>
            <consortium name="The MGC Project Team"/>
        </authorList>
    </citation>
    <scope>NUCLEOTIDE SEQUENCE [LARGE SCALE MRNA]</scope>
    <source>
        <tissue>Prostate</tissue>
    </source>
</reference>
<reference key="3">
    <citation type="journal article" date="2002" name="J. Cell Biol.">
        <title>Muscle-specific RING finger-1 interacts with titin to regulate sarcomeric M-line and thick filament structure and may have nuclear functions via its interaction with glucocorticoid modulatory element binding protein-1.</title>
        <authorList>
            <person name="McElhinny A.S."/>
            <person name="Kakinuma K."/>
            <person name="Sorimachi H."/>
            <person name="Labeit S."/>
            <person name="Gregorio C.C."/>
        </authorList>
    </citation>
    <scope>SUBCELLULAR LOCATION</scope>
</reference>
<reference key="4">
    <citation type="journal article" date="2003" name="FEBS Lett.">
        <title>Induction of MafBx and Murf ubiquitin ligase mRNAs in rat skeletal muscle after LPS injection.</title>
        <authorList>
            <person name="Dehoux M.J.M."/>
            <person name="van Beneden R.P."/>
            <person name="Fernandez-Celemin L."/>
            <person name="Lause P.L."/>
            <person name="Thissen J.-P.M."/>
        </authorList>
    </citation>
    <scope>INDUCTION</scope>
</reference>
<reference key="5">
    <citation type="journal article" date="2003" name="Int. J. Biochem. Cell Biol.">
        <title>Sepsis upregulates the gene expression of multiple ubiquitin ligases in skeletal muscle.</title>
        <authorList>
            <person name="Wray C.J."/>
            <person name="Mammen J.M.V."/>
            <person name="Hershko D.D."/>
            <person name="Hasselgren P.-O."/>
        </authorList>
    </citation>
    <scope>INDUCTION</scope>
</reference>
<reference key="6">
    <citation type="journal article" date="2004" name="FASEB J.">
        <title>Multiple types of skeletal muscle atrophy involve a common program of changes in gene expression.</title>
        <authorList>
            <person name="Lecker S.H."/>
            <person name="Jagoe R.T."/>
            <person name="Gilbert A."/>
            <person name="Gomes M."/>
            <person name="Baracos V."/>
            <person name="Bailey J."/>
            <person name="Price S.R."/>
            <person name="Mitch W.E."/>
            <person name="Goldberg A.L."/>
        </authorList>
    </citation>
    <scope>INDUCTION</scope>
</reference>
<reference key="7">
    <citation type="journal article" date="2004" name="J. Cell Biol.">
        <title>Muscle ring finger protein-1 inhibits PKC-epsilon activation and prevents cardiomyocyte hypertrophy.</title>
        <authorList>
            <person name="Arya R."/>
            <person name="Kedar V."/>
            <person name="Hwang J.R."/>
            <person name="McDonough H."/>
            <person name="Li H.-H."/>
            <person name="Taylor J."/>
            <person name="Patterson C."/>
        </authorList>
    </citation>
    <scope>FUNCTION</scope>
</reference>
<reference key="8">
    <citation type="journal article" date="2005" name="Am. J. Physiol.">
        <title>Indinavir alters regulators of protein anabolism and catabolism in skeletal muscle.</title>
        <authorList>
            <person name="Hong-Brown L.Q."/>
            <person name="Pruznak A.M."/>
            <person name="Frost R.A."/>
            <person name="Vary T.C."/>
            <person name="Lang C.H."/>
        </authorList>
    </citation>
    <scope>INDUCTION</scope>
</reference>
<reference key="9">
    <citation type="journal article" date="2005" name="Exp. Gerontol.">
        <title>Selective downregulation of ubiquitin conjugation cascade mRNA occurs in the senescent rat soleus muscle.</title>
        <authorList>
            <person name="DeRuisseau K.C."/>
            <person name="Kavazis A.N."/>
            <person name="Powers S.K."/>
        </authorList>
    </citation>
    <scope>INDUCTION</scope>
</reference>
<sequence>MDYKSGLIPDGNAMENLEKQLICPICLEMFTKPVVILPCQHNLCRKCANDIFQAANPYWTNRGGSVSMSGGRFRCPSCRHEVIMDRHGVYGLQRNLLVENIIDIYKQECSSRPLQKGSHPMCKEHEDEKINIYCLTCEVPTCSLCKVFGAHQACEVAPLQSIFQGQKTELSNCISMLVAGNDRVQTIISQLEDSCRVTKENSHQVKEELSHKFDALYAILDEKKSELLQRITQEQEEKLDFIEALILQYREQLEKSTKLVETAIQSLDEPGGATFLLSAKPLIKSIVEASKGCQLGKTEQGFENMDYFTLNLEHIAEALRAIDFGTDEEEEFTEEEEEEDQEEGVSTEGHQ</sequence>
<proteinExistence type="evidence at transcript level"/>
<protein>
    <recommendedName>
        <fullName>E3 ubiquitin-protein ligase TRIM63</fullName>
        <ecNumber>2.3.2.27</ecNumber>
    </recommendedName>
    <alternativeName>
        <fullName>Muscle-specific RING finger protein 1</fullName>
        <shortName>MuRF-1</shortName>
        <shortName>MuRF1</shortName>
    </alternativeName>
    <alternativeName>
        <fullName evidence="15">RING-type E3 ubiquitin transferase TRIM63</fullName>
    </alternativeName>
    <alternativeName>
        <fullName>Tripartite motif-containing protein 63</fullName>
    </alternativeName>
</protein>
<keyword id="KW-0175">Coiled coil</keyword>
<keyword id="KW-0963">Cytoplasm</keyword>
<keyword id="KW-0479">Metal-binding</keyword>
<keyword id="KW-0514">Muscle protein</keyword>
<keyword id="KW-0539">Nucleus</keyword>
<keyword id="KW-1185">Reference proteome</keyword>
<keyword id="KW-0808">Transferase</keyword>
<keyword id="KW-0833">Ubl conjugation pathway</keyword>
<keyword id="KW-0862">Zinc</keyword>
<keyword id="KW-0863">Zinc-finger</keyword>
<evidence type="ECO:0000250" key="1"/>
<evidence type="ECO:0000255" key="2"/>
<evidence type="ECO:0000255" key="3">
    <source>
        <dbReference type="PROSITE-ProRule" id="PRU00024"/>
    </source>
</evidence>
<evidence type="ECO:0000255" key="4">
    <source>
        <dbReference type="PROSITE-ProRule" id="PRU00175"/>
    </source>
</evidence>
<evidence type="ECO:0000255" key="5">
    <source>
        <dbReference type="PROSITE-ProRule" id="PRU00586"/>
    </source>
</evidence>
<evidence type="ECO:0000256" key="6">
    <source>
        <dbReference type="SAM" id="MobiDB-lite"/>
    </source>
</evidence>
<evidence type="ECO:0000269" key="7">
    <source>
    </source>
</evidence>
<evidence type="ECO:0000269" key="8">
    <source>
    </source>
</evidence>
<evidence type="ECO:0000269" key="9">
    <source>
    </source>
</evidence>
<evidence type="ECO:0000269" key="10">
    <source>
    </source>
</evidence>
<evidence type="ECO:0000269" key="11">
    <source>
    </source>
</evidence>
<evidence type="ECO:0000269" key="12">
    <source>
    </source>
</evidence>
<evidence type="ECO:0000269" key="13">
    <source>
    </source>
</evidence>
<evidence type="ECO:0000269" key="14">
    <source>
    </source>
</evidence>
<evidence type="ECO:0000305" key="15"/>
<comment type="function">
    <text evidence="7 12">E3 ubiquitin ligase. Mediates the ubiquitination and subsequent proteasomal degradation of CKM, GMEB1 and HIBADH. Regulates the proteasomal degradation of muscle proteins under amino acid starvation, where muscle protein is catabolized to provide other organs with amino acids. Inhibits de novo skeletal muscle protein synthesis under amino acid starvation. Regulates proteasomal degradation of cardiac troponin I/TNNI3 and probably of other sarcomeric-associated proteins. May play a role in striated muscle atrophy and hypertrophy by regulating an anti-hypertrophic PKC-mediated signaling pathway. May regulate the organization of myofibrils through TTN in muscle cells.</text>
</comment>
<comment type="catalytic activity">
    <reaction>
        <text>S-ubiquitinyl-[E2 ubiquitin-conjugating enzyme]-L-cysteine + [acceptor protein]-L-lysine = [E2 ubiquitin-conjugating enzyme]-L-cysteine + N(6)-ubiquitinyl-[acceptor protein]-L-lysine.</text>
        <dbReference type="EC" id="2.3.2.27"/>
    </reaction>
</comment>
<comment type="pathway">
    <text>Protein modification; protein ubiquitination.</text>
</comment>
<comment type="subunit">
    <text evidence="1">Homodimer. Homooligomer and heterooligomer. Interacts with SUMO2, titin/TTN and GMEB1. Interacts with TRIM54 and probably with TRIM55 and TNNI3. Forms a ternary complex with RACK1 and PRKCE. Interacts with CKM (By similarity).</text>
</comment>
<comment type="subcellular location">
    <subcellularLocation>
        <location evidence="1">Cytoplasm</location>
    </subcellularLocation>
    <subcellularLocation>
        <location evidence="1">Nucleus</location>
    </subcellularLocation>
    <subcellularLocation>
        <location evidence="1">Cytoplasm</location>
        <location evidence="1">Myofibril</location>
        <location evidence="1">Sarcomere</location>
        <location evidence="1">M line</location>
    </subcellularLocation>
    <subcellularLocation>
        <location evidence="8">Cytoplasm</location>
        <location evidence="8">Myofibril</location>
        <location evidence="8">Sarcomere</location>
        <location evidence="8">Z line</location>
    </subcellularLocation>
    <text evidence="1">Colocalizes with TNNI3 in myocytes. Localizes to the M- and Z-lines in skeletal muscle (By similarity).</text>
</comment>
<comment type="tissue specificity">
    <text evidence="7">Muscle specific. Selectively expressed in heart and skeletal muscle.</text>
</comment>
<comment type="induction">
    <text evidence="7 9 10 11 13 14">By interleukin-1, dexamethasone, lipolysaccharide and indinavir. Up-regulated upon muscle denervation, immobilization and unweighting and more generally upon muscle atrophy. Up-regulated upon sepsis. Down-regulated upon aging.</text>
</comment>
<comment type="domain">
    <text evidence="1">The RING-type zinc finger mediates interaction with SUMO2 and localization to the nucleus. Also required for the E3 ubiquitin ligase activity (By similarity).</text>
</comment>
<comment type="domain">
    <text evidence="1">The B box-type zinc finger mediates homodimerization.</text>
</comment>
<feature type="chain" id="PRO_0000056292" description="E3 ubiquitin-protein ligase TRIM63">
    <location>
        <begin position="1"/>
        <end position="351"/>
    </location>
</feature>
<feature type="domain" description="COS" evidence="5">
    <location>
        <begin position="267"/>
        <end position="325"/>
    </location>
</feature>
<feature type="zinc finger region" description="RING-type" evidence="4">
    <location>
        <begin position="23"/>
        <end position="79"/>
    </location>
</feature>
<feature type="zinc finger region" description="B box-type" evidence="3">
    <location>
        <begin position="117"/>
        <end position="159"/>
    </location>
</feature>
<feature type="region of interest" description="Interaction with TTN" evidence="1">
    <location>
        <begin position="74"/>
        <end position="218"/>
    </location>
</feature>
<feature type="region of interest" description="Disordered" evidence="6">
    <location>
        <begin position="326"/>
        <end position="351"/>
    </location>
</feature>
<feature type="coiled-coil region" evidence="2">
    <location>
        <begin position="189"/>
        <end position="269"/>
    </location>
</feature>
<feature type="compositionally biased region" description="Acidic residues" evidence="6">
    <location>
        <begin position="326"/>
        <end position="345"/>
    </location>
</feature>
<feature type="binding site" evidence="3">
    <location>
        <position position="122"/>
    </location>
    <ligand>
        <name>Zn(2+)</name>
        <dbReference type="ChEBI" id="CHEBI:29105"/>
    </ligand>
</feature>
<feature type="binding site" evidence="3">
    <location>
        <position position="125"/>
    </location>
    <ligand>
        <name>Zn(2+)</name>
        <dbReference type="ChEBI" id="CHEBI:29105"/>
    </ligand>
</feature>
<feature type="binding site" evidence="3">
    <location>
        <position position="145"/>
    </location>
    <ligand>
        <name>Zn(2+)</name>
        <dbReference type="ChEBI" id="CHEBI:29105"/>
    </ligand>
</feature>
<feature type="binding site" evidence="3">
    <location>
        <position position="151"/>
    </location>
    <ligand>
        <name>Zn(2+)</name>
        <dbReference type="ChEBI" id="CHEBI:29105"/>
    </ligand>
</feature>
<organism>
    <name type="scientific">Rattus norvegicus</name>
    <name type="common">Rat</name>
    <dbReference type="NCBI Taxonomy" id="10116"/>
    <lineage>
        <taxon>Eukaryota</taxon>
        <taxon>Metazoa</taxon>
        <taxon>Chordata</taxon>
        <taxon>Craniata</taxon>
        <taxon>Vertebrata</taxon>
        <taxon>Euteleostomi</taxon>
        <taxon>Mammalia</taxon>
        <taxon>Eutheria</taxon>
        <taxon>Euarchontoglires</taxon>
        <taxon>Glires</taxon>
        <taxon>Rodentia</taxon>
        <taxon>Myomorpha</taxon>
        <taxon>Muroidea</taxon>
        <taxon>Muridae</taxon>
        <taxon>Murinae</taxon>
        <taxon>Rattus</taxon>
    </lineage>
</organism>
<dbReference type="EC" id="2.3.2.27"/>
<dbReference type="EMBL" id="AY059627">
    <property type="protein sequence ID" value="AAL16405.1"/>
    <property type="molecule type" value="mRNA"/>
</dbReference>
<dbReference type="EMBL" id="BC061824">
    <property type="protein sequence ID" value="AAH61824.1"/>
    <property type="molecule type" value="mRNA"/>
</dbReference>
<dbReference type="RefSeq" id="NP_543179.1">
    <property type="nucleotide sequence ID" value="NM_080903.2"/>
</dbReference>
<dbReference type="SMR" id="Q91Z63"/>
<dbReference type="BioGRID" id="250873">
    <property type="interactions" value="8"/>
</dbReference>
<dbReference type="FunCoup" id="Q91Z63">
    <property type="interactions" value="156"/>
</dbReference>
<dbReference type="IntAct" id="Q91Z63">
    <property type="interactions" value="1"/>
</dbReference>
<dbReference type="STRING" id="10116.ENSRNOP00000058869"/>
<dbReference type="PhosphoSitePlus" id="Q91Z63"/>
<dbReference type="PaxDb" id="10116-ENSRNOP00000058869"/>
<dbReference type="DNASU" id="140939"/>
<dbReference type="Ensembl" id="ENSRNOT00000067524.4">
    <property type="protein sequence ID" value="ENSRNOP00000058869.1"/>
    <property type="gene ID" value="ENSRNOG00000016543.8"/>
</dbReference>
<dbReference type="GeneID" id="140939"/>
<dbReference type="KEGG" id="rno:140939"/>
<dbReference type="UCSC" id="RGD:619964">
    <property type="organism name" value="rat"/>
</dbReference>
<dbReference type="AGR" id="RGD:619964"/>
<dbReference type="CTD" id="84676"/>
<dbReference type="RGD" id="619964">
    <property type="gene designation" value="Trim63"/>
</dbReference>
<dbReference type="eggNOG" id="KOG2177">
    <property type="taxonomic scope" value="Eukaryota"/>
</dbReference>
<dbReference type="GeneTree" id="ENSGT00940000156529"/>
<dbReference type="HOGENOM" id="CLU_013137_5_1_1"/>
<dbReference type="InParanoid" id="Q91Z63"/>
<dbReference type="OMA" id="NQLEESC"/>
<dbReference type="OrthoDB" id="5351233at2759"/>
<dbReference type="Reactome" id="R-RNO-983168">
    <property type="pathway name" value="Antigen processing: Ubiquitination &amp; Proteasome degradation"/>
</dbReference>
<dbReference type="UniPathway" id="UPA00143"/>
<dbReference type="PRO" id="PR:Q91Z63"/>
<dbReference type="Proteomes" id="UP000002494">
    <property type="component" value="Chromosome 5"/>
</dbReference>
<dbReference type="Bgee" id="ENSRNOG00000016543">
    <property type="expression patterns" value="Expressed in skeletal muscle tissue and 16 other cell types or tissues"/>
</dbReference>
<dbReference type="GO" id="GO:0043292">
    <property type="term" value="C:contractile muscle fiber"/>
    <property type="evidence" value="ECO:0000314"/>
    <property type="project" value="MGI"/>
</dbReference>
<dbReference type="GO" id="GO:0080008">
    <property type="term" value="C:Cul4-RING E3 ubiquitin ligase complex"/>
    <property type="evidence" value="ECO:0000266"/>
    <property type="project" value="RGD"/>
</dbReference>
<dbReference type="GO" id="GO:0005737">
    <property type="term" value="C:cytoplasm"/>
    <property type="evidence" value="ECO:0000266"/>
    <property type="project" value="RGD"/>
</dbReference>
<dbReference type="GO" id="GO:0031430">
    <property type="term" value="C:M band"/>
    <property type="evidence" value="ECO:0007669"/>
    <property type="project" value="UniProtKB-SubCell"/>
</dbReference>
<dbReference type="GO" id="GO:0005634">
    <property type="term" value="C:nucleus"/>
    <property type="evidence" value="ECO:0007669"/>
    <property type="project" value="UniProtKB-SubCell"/>
</dbReference>
<dbReference type="GO" id="GO:0000151">
    <property type="term" value="C:ubiquitin ligase complex"/>
    <property type="evidence" value="ECO:0000303"/>
    <property type="project" value="BHF-UCL"/>
</dbReference>
<dbReference type="GO" id="GO:0030018">
    <property type="term" value="C:Z disc"/>
    <property type="evidence" value="ECO:0007669"/>
    <property type="project" value="UniProtKB-SubCell"/>
</dbReference>
<dbReference type="GO" id="GO:0031432">
    <property type="term" value="F:titin binding"/>
    <property type="evidence" value="ECO:0000266"/>
    <property type="project" value="RGD"/>
</dbReference>
<dbReference type="GO" id="GO:0061630">
    <property type="term" value="F:ubiquitin protein ligase activity"/>
    <property type="evidence" value="ECO:0000266"/>
    <property type="project" value="RGD"/>
</dbReference>
<dbReference type="GO" id="GO:0004842">
    <property type="term" value="F:ubiquitin-protein transferase activity"/>
    <property type="evidence" value="ECO:0000314"/>
    <property type="project" value="RGD"/>
</dbReference>
<dbReference type="GO" id="GO:0008270">
    <property type="term" value="F:zinc ion binding"/>
    <property type="evidence" value="ECO:0007669"/>
    <property type="project" value="UniProtKB-KW"/>
</dbReference>
<dbReference type="GO" id="GO:0071549">
    <property type="term" value="P:cellular response to dexamethasone stimulus"/>
    <property type="evidence" value="ECO:0000266"/>
    <property type="project" value="RGD"/>
</dbReference>
<dbReference type="GO" id="GO:0045087">
    <property type="term" value="P:innate immune response"/>
    <property type="evidence" value="ECO:0000318"/>
    <property type="project" value="GO_Central"/>
</dbReference>
<dbReference type="GO" id="GO:0006936">
    <property type="term" value="P:muscle contraction"/>
    <property type="evidence" value="ECO:0000314"/>
    <property type="project" value="MGI"/>
</dbReference>
<dbReference type="GO" id="GO:0014904">
    <property type="term" value="P:myotube cell development"/>
    <property type="evidence" value="ECO:0000266"/>
    <property type="project" value="RGD"/>
</dbReference>
<dbReference type="GO" id="GO:0010614">
    <property type="term" value="P:negative regulation of cardiac muscle hypertrophy"/>
    <property type="evidence" value="ECO:0000315"/>
    <property type="project" value="BHF-UCL"/>
</dbReference>
<dbReference type="GO" id="GO:0045820">
    <property type="term" value="P:negative regulation of glycolytic process"/>
    <property type="evidence" value="ECO:0000266"/>
    <property type="project" value="RGD"/>
</dbReference>
<dbReference type="GO" id="GO:0043161">
    <property type="term" value="P:proteasome-mediated ubiquitin-dependent protein catabolic process"/>
    <property type="evidence" value="ECO:0000266"/>
    <property type="project" value="RGD"/>
</dbReference>
<dbReference type="GO" id="GO:0006513">
    <property type="term" value="P:protein monoubiquitination"/>
    <property type="evidence" value="ECO:0000266"/>
    <property type="project" value="RGD"/>
</dbReference>
<dbReference type="GO" id="GO:0010468">
    <property type="term" value="P:regulation of gene expression"/>
    <property type="evidence" value="ECO:0000266"/>
    <property type="project" value="RGD"/>
</dbReference>
<dbReference type="GO" id="GO:0014894">
    <property type="term" value="P:response to denervation involved in regulation of muscle adaptation"/>
    <property type="evidence" value="ECO:0000266"/>
    <property type="project" value="RGD"/>
</dbReference>
<dbReference type="GO" id="GO:0014878">
    <property type="term" value="P:response to electrical stimulus involved in regulation of muscle adaptation"/>
    <property type="evidence" value="ECO:0000314"/>
    <property type="project" value="UniProtKB"/>
</dbReference>
<dbReference type="GO" id="GO:0051384">
    <property type="term" value="P:response to glucocorticoid"/>
    <property type="evidence" value="ECO:0000270"/>
    <property type="project" value="RGD"/>
</dbReference>
<dbReference type="GO" id="GO:0070555">
    <property type="term" value="P:response to interleukin-1"/>
    <property type="evidence" value="ECO:0000270"/>
    <property type="project" value="RGD"/>
</dbReference>
<dbReference type="GO" id="GO:0014732">
    <property type="term" value="P:skeletal muscle atrophy"/>
    <property type="evidence" value="ECO:0000270"/>
    <property type="project" value="RGD"/>
</dbReference>
<dbReference type="CDD" id="cd19831">
    <property type="entry name" value="Bbox2_MuRF1_C-II"/>
    <property type="match status" value="1"/>
</dbReference>
<dbReference type="CDD" id="cd16759">
    <property type="entry name" value="RING-HC_MuRF1"/>
    <property type="match status" value="1"/>
</dbReference>
<dbReference type="FunFam" id="3.30.40.10:FF:000014">
    <property type="entry name" value="probable E3 ubiquitin-protein ligase MID2"/>
    <property type="match status" value="1"/>
</dbReference>
<dbReference type="FunFam" id="1.20.5.170:FF:000022">
    <property type="entry name" value="Tripartite motif containing 55"/>
    <property type="match status" value="1"/>
</dbReference>
<dbReference type="FunFam" id="3.30.160.60:FF:000140">
    <property type="entry name" value="Tripartite motif containing 55"/>
    <property type="match status" value="1"/>
</dbReference>
<dbReference type="Gene3D" id="1.20.5.170">
    <property type="match status" value="1"/>
</dbReference>
<dbReference type="Gene3D" id="3.30.160.60">
    <property type="entry name" value="Classic Zinc Finger"/>
    <property type="match status" value="1"/>
</dbReference>
<dbReference type="Gene3D" id="3.30.40.10">
    <property type="entry name" value="Zinc/RING finger domain, C3HC4 (zinc finger)"/>
    <property type="match status" value="1"/>
</dbReference>
<dbReference type="InterPro" id="IPR017903">
    <property type="entry name" value="COS_domain"/>
</dbReference>
<dbReference type="InterPro" id="IPR050617">
    <property type="entry name" value="E3_ligase_FN3/SPRY"/>
</dbReference>
<dbReference type="InterPro" id="IPR042667">
    <property type="entry name" value="TRIM63_RING-HC"/>
</dbReference>
<dbReference type="InterPro" id="IPR027370">
    <property type="entry name" value="Znf-RING_euk"/>
</dbReference>
<dbReference type="InterPro" id="IPR000315">
    <property type="entry name" value="Znf_B-box"/>
</dbReference>
<dbReference type="InterPro" id="IPR001841">
    <property type="entry name" value="Znf_RING"/>
</dbReference>
<dbReference type="InterPro" id="IPR013083">
    <property type="entry name" value="Znf_RING/FYVE/PHD"/>
</dbReference>
<dbReference type="InterPro" id="IPR017907">
    <property type="entry name" value="Znf_RING_CS"/>
</dbReference>
<dbReference type="PANTHER" id="PTHR24099">
    <property type="entry name" value="E3 UBIQUITIN-PROTEIN LIGASE TRIM36-RELATED"/>
    <property type="match status" value="1"/>
</dbReference>
<dbReference type="PANTHER" id="PTHR24099:SF17">
    <property type="entry name" value="TRIPARTITE MOTIF CONTAINING 55"/>
    <property type="match status" value="1"/>
</dbReference>
<dbReference type="Pfam" id="PF00643">
    <property type="entry name" value="zf-B_box"/>
    <property type="match status" value="1"/>
</dbReference>
<dbReference type="Pfam" id="PF13445">
    <property type="entry name" value="zf-RING_UBOX"/>
    <property type="match status" value="1"/>
</dbReference>
<dbReference type="SMART" id="SM00336">
    <property type="entry name" value="BBOX"/>
    <property type="match status" value="1"/>
</dbReference>
<dbReference type="SMART" id="SM00184">
    <property type="entry name" value="RING"/>
    <property type="match status" value="1"/>
</dbReference>
<dbReference type="SUPFAM" id="SSF57845">
    <property type="entry name" value="B-box zinc-binding domain"/>
    <property type="match status" value="1"/>
</dbReference>
<dbReference type="SUPFAM" id="SSF57850">
    <property type="entry name" value="RING/U-box"/>
    <property type="match status" value="1"/>
</dbReference>
<dbReference type="PROSITE" id="PS51262">
    <property type="entry name" value="COS"/>
    <property type="match status" value="1"/>
</dbReference>
<dbReference type="PROSITE" id="PS50119">
    <property type="entry name" value="ZF_BBOX"/>
    <property type="match status" value="1"/>
</dbReference>
<dbReference type="PROSITE" id="PS00518">
    <property type="entry name" value="ZF_RING_1"/>
    <property type="match status" value="1"/>
</dbReference>
<dbReference type="PROSITE" id="PS50089">
    <property type="entry name" value="ZF_RING_2"/>
    <property type="match status" value="1"/>
</dbReference>